<organism>
    <name type="scientific">Theileria parva</name>
    <name type="common">East coast fever infection agent</name>
    <dbReference type="NCBI Taxonomy" id="5875"/>
    <lineage>
        <taxon>Eukaryota</taxon>
        <taxon>Sar</taxon>
        <taxon>Alveolata</taxon>
        <taxon>Apicomplexa</taxon>
        <taxon>Aconoidasida</taxon>
        <taxon>Piroplasmida</taxon>
        <taxon>Theileriidae</taxon>
        <taxon>Theileria</taxon>
    </lineage>
</organism>
<feature type="initiator methionine" description="Removed" evidence="1">
    <location>
        <position position="1"/>
    </location>
</feature>
<feature type="chain" id="PRO_0000232675" description="Small ribosomal subunit protein eS17">
    <location>
        <begin position="2"/>
        <end position="130"/>
    </location>
</feature>
<keyword id="KW-1185">Reference proteome</keyword>
<keyword id="KW-0687">Ribonucleoprotein</keyword>
<keyword id="KW-0689">Ribosomal protein</keyword>
<proteinExistence type="inferred from homology"/>
<name>RS17_THEPA</name>
<comment type="similarity">
    <text evidence="2">Belongs to the eukaryotic ribosomal protein eS17 family.</text>
</comment>
<evidence type="ECO:0000250" key="1"/>
<evidence type="ECO:0000305" key="2"/>
<dbReference type="EMBL" id="AAGK01000006">
    <property type="protein sequence ID" value="EAN30551.1"/>
    <property type="molecule type" value="Genomic_DNA"/>
</dbReference>
<dbReference type="RefSeq" id="XP_762834.1">
    <property type="nucleotide sequence ID" value="XM_757741.1"/>
</dbReference>
<dbReference type="SMR" id="Q4MYY1"/>
<dbReference type="FunCoup" id="Q4MYY1">
    <property type="interactions" value="373"/>
</dbReference>
<dbReference type="STRING" id="5875.Q4MYY1"/>
<dbReference type="EnsemblProtists" id="EAN30551">
    <property type="protein sequence ID" value="EAN30551"/>
    <property type="gene ID" value="TP03_0710"/>
</dbReference>
<dbReference type="GeneID" id="3499640"/>
<dbReference type="KEGG" id="tpv:TP03_0710"/>
<dbReference type="VEuPathDB" id="PiroplasmaDB:TpMuguga_03g00710"/>
<dbReference type="eggNOG" id="KOG0187">
    <property type="taxonomic scope" value="Eukaryota"/>
</dbReference>
<dbReference type="InParanoid" id="Q4MYY1"/>
<dbReference type="OMA" id="MKRIQQG"/>
<dbReference type="Proteomes" id="UP000001949">
    <property type="component" value="Unassembled WGS sequence"/>
</dbReference>
<dbReference type="GO" id="GO:0005829">
    <property type="term" value="C:cytosol"/>
    <property type="evidence" value="ECO:0007669"/>
    <property type="project" value="UniProtKB-ARBA"/>
</dbReference>
<dbReference type="GO" id="GO:1990904">
    <property type="term" value="C:ribonucleoprotein complex"/>
    <property type="evidence" value="ECO:0007669"/>
    <property type="project" value="UniProtKB-KW"/>
</dbReference>
<dbReference type="GO" id="GO:0005840">
    <property type="term" value="C:ribosome"/>
    <property type="evidence" value="ECO:0007669"/>
    <property type="project" value="UniProtKB-KW"/>
</dbReference>
<dbReference type="GO" id="GO:0003735">
    <property type="term" value="F:structural constituent of ribosome"/>
    <property type="evidence" value="ECO:0007669"/>
    <property type="project" value="InterPro"/>
</dbReference>
<dbReference type="GO" id="GO:0006412">
    <property type="term" value="P:translation"/>
    <property type="evidence" value="ECO:0007669"/>
    <property type="project" value="InterPro"/>
</dbReference>
<dbReference type="FunFam" id="1.10.60.20:FF:000001">
    <property type="entry name" value="40S ribosomal protein S17"/>
    <property type="match status" value="1"/>
</dbReference>
<dbReference type="Gene3D" id="1.10.60.20">
    <property type="entry name" value="Ribosomal protein S17e-like"/>
    <property type="match status" value="1"/>
</dbReference>
<dbReference type="HAMAP" id="MF_00511">
    <property type="entry name" value="Ribosomal_eS17"/>
    <property type="match status" value="1"/>
</dbReference>
<dbReference type="InterPro" id="IPR001210">
    <property type="entry name" value="Ribosomal_eS17"/>
</dbReference>
<dbReference type="InterPro" id="IPR018273">
    <property type="entry name" value="Ribosomal_eS17_CS"/>
</dbReference>
<dbReference type="InterPro" id="IPR036401">
    <property type="entry name" value="Ribosomal_eS17_sf"/>
</dbReference>
<dbReference type="NCBIfam" id="NF002242">
    <property type="entry name" value="PRK01151.1"/>
    <property type="match status" value="1"/>
</dbReference>
<dbReference type="PANTHER" id="PTHR10732">
    <property type="entry name" value="40S RIBOSOMAL PROTEIN S17"/>
    <property type="match status" value="1"/>
</dbReference>
<dbReference type="PANTHER" id="PTHR10732:SF0">
    <property type="entry name" value="40S RIBOSOMAL PROTEIN S17"/>
    <property type="match status" value="1"/>
</dbReference>
<dbReference type="Pfam" id="PF00833">
    <property type="entry name" value="Ribosomal_S17e"/>
    <property type="match status" value="1"/>
</dbReference>
<dbReference type="SUPFAM" id="SSF116820">
    <property type="entry name" value="Rps17e-like"/>
    <property type="match status" value="1"/>
</dbReference>
<dbReference type="PROSITE" id="PS00712">
    <property type="entry name" value="RIBOSOMAL_S17E"/>
    <property type="match status" value="1"/>
</dbReference>
<gene>
    <name type="primary">RPS17</name>
    <name type="ordered locus">TP03_0710</name>
</gene>
<accession>Q4MYY1</accession>
<protein>
    <recommendedName>
        <fullName evidence="2">Small ribosomal subunit protein eS17</fullName>
    </recommendedName>
    <alternativeName>
        <fullName>40S ribosomal protein S17</fullName>
    </alternativeName>
</protein>
<reference key="1">
    <citation type="journal article" date="2005" name="Science">
        <title>Genome sequence of Theileria parva, a bovine pathogen that transforms lymphocytes.</title>
        <authorList>
            <person name="Gardner M.J."/>
            <person name="Bishop R."/>
            <person name="Shah T."/>
            <person name="de Villiers E.P."/>
            <person name="Carlton J.M."/>
            <person name="Hall N."/>
            <person name="Ren Q."/>
            <person name="Paulsen I.T."/>
            <person name="Pain A."/>
            <person name="Berriman M."/>
            <person name="Wilson R.J.M."/>
            <person name="Sato S."/>
            <person name="Ralph S.A."/>
            <person name="Mann D.J."/>
            <person name="Xiong Z."/>
            <person name="Shallom S.J."/>
            <person name="Weidman J."/>
            <person name="Jiang L."/>
            <person name="Lynn J."/>
            <person name="Weaver B."/>
            <person name="Shoaibi A."/>
            <person name="Domingo A.R."/>
            <person name="Wasawo D."/>
            <person name="Crabtree J."/>
            <person name="Wortman J.R."/>
            <person name="Haas B."/>
            <person name="Angiuoli S.V."/>
            <person name="Creasy T.H."/>
            <person name="Lu C."/>
            <person name="Suh B."/>
            <person name="Silva J.C."/>
            <person name="Utterback T.R."/>
            <person name="Feldblyum T.V."/>
            <person name="Pertea M."/>
            <person name="Allen J."/>
            <person name="Nierman W.C."/>
            <person name="Taracha E.L.N."/>
            <person name="Salzberg S.L."/>
            <person name="White O.R."/>
            <person name="Fitzhugh H.A."/>
            <person name="Morzaria S."/>
            <person name="Venter J.C."/>
            <person name="Fraser C.M."/>
            <person name="Nene V."/>
        </authorList>
    </citation>
    <scope>NUCLEOTIDE SEQUENCE [LARGE SCALE GENOMIC DNA]</scope>
    <source>
        <strain>Muguga</strain>
    </source>
</reference>
<sequence>MGRVRTKTVKRAARQIVEKYYGKLGLDFQYNKKVAEEVALIPSKRMRNKVAGFITHLMRRIQKGPVRGISLKLQEEERERRMDYIPEKSELEVPVIQVDQDTADMLNFLKISLPNLKVMSFNAHEHRERH</sequence>